<name>RL4_RHOPB</name>
<organism>
    <name type="scientific">Rhodopseudomonas palustris (strain BisB18)</name>
    <dbReference type="NCBI Taxonomy" id="316056"/>
    <lineage>
        <taxon>Bacteria</taxon>
        <taxon>Pseudomonadati</taxon>
        <taxon>Pseudomonadota</taxon>
        <taxon>Alphaproteobacteria</taxon>
        <taxon>Hyphomicrobiales</taxon>
        <taxon>Nitrobacteraceae</taxon>
        <taxon>Rhodopseudomonas</taxon>
    </lineage>
</organism>
<reference key="1">
    <citation type="submission" date="2006-03" db="EMBL/GenBank/DDBJ databases">
        <title>Complete sequence of Rhodopseudomonas palustris BisB18.</title>
        <authorList>
            <consortium name="US DOE Joint Genome Institute"/>
            <person name="Copeland A."/>
            <person name="Lucas S."/>
            <person name="Lapidus A."/>
            <person name="Barry K."/>
            <person name="Detter J.C."/>
            <person name="Glavina del Rio T."/>
            <person name="Hammon N."/>
            <person name="Israni S."/>
            <person name="Dalin E."/>
            <person name="Tice H."/>
            <person name="Pitluck S."/>
            <person name="Chain P."/>
            <person name="Malfatti S."/>
            <person name="Shin M."/>
            <person name="Vergez L."/>
            <person name="Schmutz J."/>
            <person name="Larimer F."/>
            <person name="Land M."/>
            <person name="Hauser L."/>
            <person name="Pelletier D.A."/>
            <person name="Kyrpides N."/>
            <person name="Anderson I."/>
            <person name="Oda Y."/>
            <person name="Harwood C.S."/>
            <person name="Richardson P."/>
        </authorList>
    </citation>
    <scope>NUCLEOTIDE SEQUENCE [LARGE SCALE GENOMIC DNA]</scope>
    <source>
        <strain>BisB18</strain>
    </source>
</reference>
<sequence length="206" mass="22225">MELKVTTLEGKEAGSVQLSDEIFGLDPRVDIIQRCVNWQLAKRQAGTHKAKGRAEVWRTGKKMYKQKGTGGARHGSQRVPQFRGGGRAFGPVVRSHAFDLPKKVRALALKHALSAKAKDGGLIVIESATLEAAKTKALVGHFSGLGLTSALIIDGAELNNGFAVAARNIPNIDVLPIQGINVYDILRRQKLVLTKAAVDALEARFK</sequence>
<dbReference type="EMBL" id="CP000301">
    <property type="protein sequence ID" value="ABD88987.1"/>
    <property type="molecule type" value="Genomic_DNA"/>
</dbReference>
<dbReference type="SMR" id="Q211E9"/>
<dbReference type="STRING" id="316056.RPC_3447"/>
<dbReference type="KEGG" id="rpc:RPC_3447"/>
<dbReference type="eggNOG" id="COG0088">
    <property type="taxonomic scope" value="Bacteria"/>
</dbReference>
<dbReference type="HOGENOM" id="CLU_041575_5_1_5"/>
<dbReference type="OrthoDB" id="9803201at2"/>
<dbReference type="GO" id="GO:1990904">
    <property type="term" value="C:ribonucleoprotein complex"/>
    <property type="evidence" value="ECO:0007669"/>
    <property type="project" value="UniProtKB-KW"/>
</dbReference>
<dbReference type="GO" id="GO:0005840">
    <property type="term" value="C:ribosome"/>
    <property type="evidence" value="ECO:0007669"/>
    <property type="project" value="UniProtKB-KW"/>
</dbReference>
<dbReference type="GO" id="GO:0019843">
    <property type="term" value="F:rRNA binding"/>
    <property type="evidence" value="ECO:0007669"/>
    <property type="project" value="UniProtKB-UniRule"/>
</dbReference>
<dbReference type="GO" id="GO:0003735">
    <property type="term" value="F:structural constituent of ribosome"/>
    <property type="evidence" value="ECO:0007669"/>
    <property type="project" value="InterPro"/>
</dbReference>
<dbReference type="GO" id="GO:0006412">
    <property type="term" value="P:translation"/>
    <property type="evidence" value="ECO:0007669"/>
    <property type="project" value="UniProtKB-UniRule"/>
</dbReference>
<dbReference type="Gene3D" id="3.40.1370.10">
    <property type="match status" value="1"/>
</dbReference>
<dbReference type="HAMAP" id="MF_01328_B">
    <property type="entry name" value="Ribosomal_uL4_B"/>
    <property type="match status" value="1"/>
</dbReference>
<dbReference type="InterPro" id="IPR002136">
    <property type="entry name" value="Ribosomal_uL4"/>
</dbReference>
<dbReference type="InterPro" id="IPR013005">
    <property type="entry name" value="Ribosomal_uL4-like"/>
</dbReference>
<dbReference type="InterPro" id="IPR023574">
    <property type="entry name" value="Ribosomal_uL4_dom_sf"/>
</dbReference>
<dbReference type="NCBIfam" id="TIGR03953">
    <property type="entry name" value="rplD_bact"/>
    <property type="match status" value="1"/>
</dbReference>
<dbReference type="PANTHER" id="PTHR10746">
    <property type="entry name" value="50S RIBOSOMAL PROTEIN L4"/>
    <property type="match status" value="1"/>
</dbReference>
<dbReference type="PANTHER" id="PTHR10746:SF6">
    <property type="entry name" value="LARGE RIBOSOMAL SUBUNIT PROTEIN UL4M"/>
    <property type="match status" value="1"/>
</dbReference>
<dbReference type="Pfam" id="PF00573">
    <property type="entry name" value="Ribosomal_L4"/>
    <property type="match status" value="1"/>
</dbReference>
<dbReference type="SUPFAM" id="SSF52166">
    <property type="entry name" value="Ribosomal protein L4"/>
    <property type="match status" value="1"/>
</dbReference>
<gene>
    <name evidence="1" type="primary">rplD</name>
    <name type="ordered locus">RPC_3447</name>
</gene>
<evidence type="ECO:0000255" key="1">
    <source>
        <dbReference type="HAMAP-Rule" id="MF_01328"/>
    </source>
</evidence>
<evidence type="ECO:0000305" key="2"/>
<protein>
    <recommendedName>
        <fullName evidence="1">Large ribosomal subunit protein uL4</fullName>
    </recommendedName>
    <alternativeName>
        <fullName evidence="2">50S ribosomal protein L4</fullName>
    </alternativeName>
</protein>
<accession>Q211E9</accession>
<keyword id="KW-0687">Ribonucleoprotein</keyword>
<keyword id="KW-0689">Ribosomal protein</keyword>
<keyword id="KW-0694">RNA-binding</keyword>
<keyword id="KW-0699">rRNA-binding</keyword>
<proteinExistence type="inferred from homology"/>
<comment type="function">
    <text evidence="1">One of the primary rRNA binding proteins, this protein initially binds near the 5'-end of the 23S rRNA. It is important during the early stages of 50S assembly. It makes multiple contacts with different domains of the 23S rRNA in the assembled 50S subunit and ribosome.</text>
</comment>
<comment type="function">
    <text evidence="1">Forms part of the polypeptide exit tunnel.</text>
</comment>
<comment type="subunit">
    <text evidence="1">Part of the 50S ribosomal subunit.</text>
</comment>
<comment type="similarity">
    <text evidence="1">Belongs to the universal ribosomal protein uL4 family.</text>
</comment>
<feature type="chain" id="PRO_0000242426" description="Large ribosomal subunit protein uL4">
    <location>
        <begin position="1"/>
        <end position="206"/>
    </location>
</feature>